<evidence type="ECO:0000255" key="1">
    <source>
        <dbReference type="HAMAP-Rule" id="MF_01561"/>
    </source>
</evidence>
<reference key="1">
    <citation type="journal article" date="2003" name="Genome Res.">
        <title>Comparative genome analysis of Vibrio vulnificus, a marine pathogen.</title>
        <authorList>
            <person name="Chen C.-Y."/>
            <person name="Wu K.-M."/>
            <person name="Chang Y.-C."/>
            <person name="Chang C.-H."/>
            <person name="Tsai H.-C."/>
            <person name="Liao T.-L."/>
            <person name="Liu Y.-M."/>
            <person name="Chen H.-J."/>
            <person name="Shen A.B.-T."/>
            <person name="Li J.-C."/>
            <person name="Su T.-L."/>
            <person name="Shao C.-P."/>
            <person name="Lee C.-T."/>
            <person name="Hor L.-I."/>
            <person name="Tsai S.-F."/>
        </authorList>
    </citation>
    <scope>NUCLEOTIDE SEQUENCE [LARGE SCALE GENOMIC DNA]</scope>
    <source>
        <strain>YJ016</strain>
    </source>
</reference>
<proteinExistence type="inferred from homology"/>
<comment type="cofactor">
    <cofactor evidence="1">
        <name>Zn(2+)</name>
        <dbReference type="ChEBI" id="CHEBI:29105"/>
    </cofactor>
    <text evidence="1">Binds 3 Zn(2+) ions per subunit.</text>
</comment>
<comment type="similarity">
    <text evidence="1">Belongs to the PHP family.</text>
</comment>
<sequence>MELKIDTHSHTYASGHAYSTLIENARSAKENGLAMFCTTDHAESMPGAPHYWFFANQRVLPRFLEGVAILRGVEANILNTEGEIDLPLSVDPNLDWAIASFHEPVFAPSNKEAHTQALLNVIQGGRIDALGHLGNPHFDFDFHAVLHCAKEHNVAIEINNSTLKGHSRVGSVERCYEIARVGKALGVYFTTGSDAHFCQDVGKLDLASELLDSVGIDSHRVITHSPSQFLDFLELRGRGPIDELASLRQ</sequence>
<gene>
    <name type="ordered locus">VVA0289</name>
</gene>
<keyword id="KW-0378">Hydrolase</keyword>
<keyword id="KW-0479">Metal-binding</keyword>
<keyword id="KW-0862">Zinc</keyword>
<name>Y4289_VIBVY</name>
<organism>
    <name type="scientific">Vibrio vulnificus (strain YJ016)</name>
    <dbReference type="NCBI Taxonomy" id="196600"/>
    <lineage>
        <taxon>Bacteria</taxon>
        <taxon>Pseudomonadati</taxon>
        <taxon>Pseudomonadota</taxon>
        <taxon>Gammaproteobacteria</taxon>
        <taxon>Vibrionales</taxon>
        <taxon>Vibrionaceae</taxon>
        <taxon>Vibrio</taxon>
    </lineage>
</organism>
<protein>
    <recommendedName>
        <fullName evidence="1">Probable phosphatase VVA0289</fullName>
        <ecNumber evidence="1">3.1.3.-</ecNumber>
    </recommendedName>
</protein>
<feature type="chain" id="PRO_0000228712" description="Probable phosphatase VVA0289">
    <location>
        <begin position="1"/>
        <end position="249"/>
    </location>
</feature>
<feature type="binding site" evidence="1">
    <location>
        <position position="8"/>
    </location>
    <ligand>
        <name>Zn(2+)</name>
        <dbReference type="ChEBI" id="CHEBI:29105"/>
        <label>1</label>
    </ligand>
</feature>
<feature type="binding site" evidence="1">
    <location>
        <position position="10"/>
    </location>
    <ligand>
        <name>Zn(2+)</name>
        <dbReference type="ChEBI" id="CHEBI:29105"/>
        <label>1</label>
    </ligand>
</feature>
<feature type="binding site" evidence="1">
    <location>
        <position position="16"/>
    </location>
    <ligand>
        <name>Zn(2+)</name>
        <dbReference type="ChEBI" id="CHEBI:29105"/>
        <label>2</label>
    </ligand>
</feature>
<feature type="binding site" evidence="1">
    <location>
        <position position="41"/>
    </location>
    <ligand>
        <name>Zn(2+)</name>
        <dbReference type="ChEBI" id="CHEBI:29105"/>
        <label>2</label>
    </ligand>
</feature>
<feature type="binding site" evidence="1">
    <location>
        <position position="74"/>
    </location>
    <ligand>
        <name>Zn(2+)</name>
        <dbReference type="ChEBI" id="CHEBI:29105"/>
        <label>1</label>
    </ligand>
</feature>
<feature type="binding site" evidence="1">
    <location>
        <position position="74"/>
    </location>
    <ligand>
        <name>Zn(2+)</name>
        <dbReference type="ChEBI" id="CHEBI:29105"/>
        <label>3</label>
    </ligand>
</feature>
<feature type="binding site" evidence="1">
    <location>
        <position position="102"/>
    </location>
    <ligand>
        <name>Zn(2+)</name>
        <dbReference type="ChEBI" id="CHEBI:29105"/>
        <label>3</label>
    </ligand>
</feature>
<feature type="binding site" evidence="1">
    <location>
        <position position="132"/>
    </location>
    <ligand>
        <name>Zn(2+)</name>
        <dbReference type="ChEBI" id="CHEBI:29105"/>
        <label>3</label>
    </ligand>
</feature>
<feature type="binding site" evidence="1">
    <location>
        <position position="194"/>
    </location>
    <ligand>
        <name>Zn(2+)</name>
        <dbReference type="ChEBI" id="CHEBI:29105"/>
        <label>1</label>
    </ligand>
</feature>
<feature type="binding site" evidence="1">
    <location>
        <position position="196"/>
    </location>
    <ligand>
        <name>Zn(2+)</name>
        <dbReference type="ChEBI" id="CHEBI:29105"/>
        <label>2</label>
    </ligand>
</feature>
<dbReference type="EC" id="3.1.3.-" evidence="1"/>
<dbReference type="EMBL" id="BA000038">
    <property type="protein sequence ID" value="BAC96315.1"/>
    <property type="molecule type" value="Genomic_DNA"/>
</dbReference>
<dbReference type="RefSeq" id="WP_011151697.1">
    <property type="nucleotide sequence ID" value="NC_005140.1"/>
</dbReference>
<dbReference type="SMR" id="Q7MFN1"/>
<dbReference type="STRING" id="672.VV93_v1c32780"/>
<dbReference type="KEGG" id="vvy:VVA0289"/>
<dbReference type="eggNOG" id="COG1387">
    <property type="taxonomic scope" value="Bacteria"/>
</dbReference>
<dbReference type="HOGENOM" id="CLU_061999_0_1_6"/>
<dbReference type="Proteomes" id="UP000002675">
    <property type="component" value="Chromosome II"/>
</dbReference>
<dbReference type="GO" id="GO:0005829">
    <property type="term" value="C:cytosol"/>
    <property type="evidence" value="ECO:0007669"/>
    <property type="project" value="TreeGrafter"/>
</dbReference>
<dbReference type="GO" id="GO:0016791">
    <property type="term" value="F:phosphatase activity"/>
    <property type="evidence" value="ECO:0007669"/>
    <property type="project" value="UniProtKB-UniRule"/>
</dbReference>
<dbReference type="GO" id="GO:0008270">
    <property type="term" value="F:zinc ion binding"/>
    <property type="evidence" value="ECO:0007669"/>
    <property type="project" value="UniProtKB-UniRule"/>
</dbReference>
<dbReference type="GO" id="GO:0071978">
    <property type="term" value="P:bacterial-type flagellum-dependent swarming motility"/>
    <property type="evidence" value="ECO:0007669"/>
    <property type="project" value="TreeGrafter"/>
</dbReference>
<dbReference type="CDD" id="cd07437">
    <property type="entry name" value="PHP_HisPPase_Ycdx_like"/>
    <property type="match status" value="1"/>
</dbReference>
<dbReference type="Gene3D" id="3.20.20.140">
    <property type="entry name" value="Metal-dependent hydrolases"/>
    <property type="match status" value="1"/>
</dbReference>
<dbReference type="HAMAP" id="MF_01561">
    <property type="entry name" value="YcdX_phosphat"/>
    <property type="match status" value="1"/>
</dbReference>
<dbReference type="InterPro" id="IPR023710">
    <property type="entry name" value="Phosphatase_YcdX_put"/>
</dbReference>
<dbReference type="InterPro" id="IPR004013">
    <property type="entry name" value="PHP_dom"/>
</dbReference>
<dbReference type="InterPro" id="IPR050243">
    <property type="entry name" value="PHP_phosphatase"/>
</dbReference>
<dbReference type="InterPro" id="IPR003141">
    <property type="entry name" value="Pol/His_phosphatase_N"/>
</dbReference>
<dbReference type="InterPro" id="IPR016195">
    <property type="entry name" value="Pol/histidinol_Pase-like"/>
</dbReference>
<dbReference type="NCBIfam" id="NF006702">
    <property type="entry name" value="PRK09248.1"/>
    <property type="match status" value="1"/>
</dbReference>
<dbReference type="PANTHER" id="PTHR36928">
    <property type="entry name" value="PHOSPHATASE YCDX-RELATED"/>
    <property type="match status" value="1"/>
</dbReference>
<dbReference type="PANTHER" id="PTHR36928:SF1">
    <property type="entry name" value="PHOSPHATASE YCDX-RELATED"/>
    <property type="match status" value="1"/>
</dbReference>
<dbReference type="Pfam" id="PF02811">
    <property type="entry name" value="PHP"/>
    <property type="match status" value="1"/>
</dbReference>
<dbReference type="SMART" id="SM00481">
    <property type="entry name" value="POLIIIAc"/>
    <property type="match status" value="1"/>
</dbReference>
<dbReference type="SUPFAM" id="SSF89550">
    <property type="entry name" value="PHP domain-like"/>
    <property type="match status" value="1"/>
</dbReference>
<accession>Q7MFN1</accession>